<protein>
    <recommendedName>
        <fullName>Alpha-1-syntrophin</fullName>
    </recommendedName>
    <alternativeName>
        <fullName>59 kDa dystrophin-associated protein A1 acidic component 1</fullName>
    </alternativeName>
    <alternativeName>
        <fullName>Pro-TGF-alpha cytoplasmic domain-interacting protein 1</fullName>
        <shortName>TACIP1</shortName>
    </alternativeName>
    <alternativeName>
        <fullName>Syntrophin-1</fullName>
    </alternativeName>
</protein>
<proteinExistence type="evidence at protein level"/>
<comment type="function">
    <text evidence="1">Adapter protein that binds to and probably organizes the subcellular localization of a variety of membrane proteins. May link various receptors to the actin cytoskeleton and the extracellular matrix via the dystrophin glycoprotein complex. Plays an important role in synapse formation and in the organization of UTRN and acetylcholine receptors at the neuromuscular synapse. Binds to phosphatidylinositol 4,5-bisphosphate (By similarity).</text>
</comment>
<comment type="subunit">
    <text evidence="1 2">Monomer and homodimer. Interacts with the other members of the syntrophin family SNTB1 and SNTB2; SGCG and SGCA of the dystrophin glycoprotein complex; NOS1; GRB2; the sodium channel proteins SCN4A and SCN5A; F-actin and calmodulin (By similarity). Interacts with dystrophin protein DMD and related proteins DTNA and UTRN and with MAPK12, TGFA and GA. Interacts with MYOC; regulates muscle hypertrophy (By similarity). Interacts with DTNB (By similarity).</text>
</comment>
<comment type="interaction">
    <interactant intactId="EBI-717191">
        <id>Q13424</id>
    </interactant>
    <interactant intactId="EBI-784112">
        <id>O95477</id>
        <label>ABCA1</label>
    </interactant>
    <organismsDiffer>false</organismsDiffer>
    <experiments>2</experiments>
</comment>
<comment type="interaction">
    <interactant intactId="EBI-717191">
        <id>Q13424</id>
    </interactant>
    <interactant intactId="EBI-489993">
        <id>P25100</id>
        <label>ADRA1D</label>
    </interactant>
    <organismsDiffer>false</organismsDiffer>
    <experiments>11</experiments>
</comment>
<comment type="interaction">
    <interactant intactId="EBI-717191">
        <id>Q13424</id>
    </interactant>
    <interactant intactId="EBI-295827">
        <id>P11532</id>
        <label>DMD</label>
    </interactant>
    <organismsDiffer>false</organismsDiffer>
    <experiments>5</experiments>
</comment>
<comment type="interaction">
    <interactant intactId="EBI-717191">
        <id>Q13424</id>
    </interactant>
    <interactant intactId="EBI-783937">
        <id>Q63538</id>
        <label>Mapk12</label>
    </interactant>
    <organismsDiffer>true</organismsDiffer>
    <experiments>5</experiments>
</comment>
<comment type="subcellular location">
    <subcellularLocation>
        <location evidence="1">Cell membrane</location>
        <location evidence="1">Sarcolemma</location>
        <topology evidence="1">Peripheral membrane protein</topology>
        <orientation evidence="1">Cytoplasmic side</orientation>
    </subcellularLocation>
    <subcellularLocation>
        <location evidence="1">Cell junction</location>
    </subcellularLocation>
    <subcellularLocation>
        <location evidence="1">Cytoplasm</location>
        <location evidence="1">Cytoskeleton</location>
    </subcellularLocation>
    <text evidence="1">In skeletal muscle, it localizes at the cytoplasmic side of the sarcolemmal membrane and at neuromuscular junctions.</text>
</comment>
<comment type="alternative products">
    <event type="alternative splicing"/>
    <isoform>
        <id>Q13424-1</id>
        <name>1</name>
        <sequence type="displayed"/>
    </isoform>
    <isoform>
        <id>Q13424-2</id>
        <name>2</name>
        <sequence type="described" ref="VSP_056827"/>
    </isoform>
</comment>
<comment type="tissue specificity">
    <text>High expression in skeletal muscle and heart. Low expression in brain, pancreas, liver, kidney and lung. Not detected in placenta.</text>
</comment>
<comment type="domain">
    <text evidence="1">The PH 1 domain mediates the oligomerization in a calcium dependent manner, and the association with the phosphatidylinositol 4,5-bisphosphate.</text>
</comment>
<comment type="domain">
    <text evidence="1">The PDZ domain binds to the last three or four amino acids of ion channels and receptor proteins. The association with dystrophin or related proteins probably leaves the PDZ domain available to recruit proteins to the membrane (By similarity).</text>
</comment>
<comment type="domain">
    <text evidence="1">The SU domain binds calmodulin in a calcium-dependent manner.</text>
</comment>
<comment type="PTM">
    <text evidence="1">Phosphorylated by CaM-kinase II. Phosphorylation may inhibit the interaction with DMD (By similarity).</text>
</comment>
<comment type="disease" evidence="6 7">
    <disease id="DI-02487">
        <name>Long QT syndrome 12</name>
        <acronym>LQT12</acronym>
        <description>A heart disorder characterized by a prolonged QT interval on the ECG and polymorphic ventricular arrhythmias. They cause syncope and sudden death in response to exercise or emotional stress, and can present with a sentinel event of sudden cardiac death in infancy.</description>
        <dbReference type="MIM" id="612955"/>
    </disease>
    <text>The disease is caused by variants affecting the gene represented in this entry.</text>
</comment>
<comment type="similarity">
    <text evidence="9">Belongs to the syntrophin family.</text>
</comment>
<sequence>MASGRRAPRTGLLELRAGAGSGAGGERWQRVLLSLAEDVLTVSPADGDPGPEPGAPREQEPAQLNGAAEPGAGPPQLPEALLLQRRRVTVRKADAGGLGISIKGGRENKMPILISKIFKGLAADQTEALFVGDAILSVNGEDLSSATHDEAVQVLKKTGKEVVLEVKYMKDVSPYFKNSTGGTSVGWDSPPASPLQRQPSSPGPTPRNFSEAKHMSLKMAYVSKRCTPNDPEPRYLEICSADGQDTLFLRAKDEASARSWATAIQAQVNTLTPRVKDELQALLAATSTAGSQDIKQIGWLTEQLPSGGTAPTLALLTEKELLLYLSLPETREALSRPARTAPLIATRLVHSGPSKGSVPYDAELSFALRTGTRHGVDTHLFSVESPQELAAWTRQLVDGCHRAAEGVQEVSTACTWNGRPCSLSVHIDKGFTLWAAEPGAARAVLLRQPFEKLQMSSDDGASLLFLDFGGAEGEIQLDLHSCPKTIVFIIHSFLSAKVTRLGLLA</sequence>
<keyword id="KW-0009">Actin-binding</keyword>
<keyword id="KW-0025">Alternative splicing</keyword>
<keyword id="KW-0106">Calcium</keyword>
<keyword id="KW-0112">Calmodulin-binding</keyword>
<keyword id="KW-0965">Cell junction</keyword>
<keyword id="KW-1003">Cell membrane</keyword>
<keyword id="KW-0963">Cytoplasm</keyword>
<keyword id="KW-0206">Cytoskeleton</keyword>
<keyword id="KW-0225">Disease variant</keyword>
<keyword id="KW-0454">Long QT syndrome</keyword>
<keyword id="KW-0472">Membrane</keyword>
<keyword id="KW-0597">Phosphoprotein</keyword>
<keyword id="KW-1267">Proteomics identification</keyword>
<keyword id="KW-1185">Reference proteome</keyword>
<keyword id="KW-0677">Repeat</keyword>
<dbReference type="EMBL" id="U40571">
    <property type="protein sequence ID" value="AAC50448.1"/>
    <property type="molecule type" value="mRNA"/>
</dbReference>
<dbReference type="EMBL" id="S81737">
    <property type="protein sequence ID" value="AAB36398.1"/>
    <property type="molecule type" value="mRNA"/>
</dbReference>
<dbReference type="EMBL" id="AL355392">
    <property type="status" value="NOT_ANNOTATED_CDS"/>
    <property type="molecule type" value="Genomic_DNA"/>
</dbReference>
<dbReference type="EMBL" id="AK291994">
    <property type="protein sequence ID" value="BAF84683.1"/>
    <property type="molecule type" value="mRNA"/>
</dbReference>
<dbReference type="EMBL" id="AK301800">
    <property type="protein sequence ID" value="BAG63252.1"/>
    <property type="molecule type" value="mRNA"/>
</dbReference>
<dbReference type="EMBL" id="CH471077">
    <property type="protein sequence ID" value="EAW76316.1"/>
    <property type="molecule type" value="Genomic_DNA"/>
</dbReference>
<dbReference type="EMBL" id="CH471077">
    <property type="protein sequence ID" value="EAW76317.1"/>
    <property type="molecule type" value="Genomic_DNA"/>
</dbReference>
<dbReference type="EMBL" id="BC026215">
    <property type="protein sequence ID" value="AAH26215.1"/>
    <property type="molecule type" value="mRNA"/>
</dbReference>
<dbReference type="CCDS" id="CCDS13220.1">
    <molecule id="Q13424-1"/>
</dbReference>
<dbReference type="PIR" id="S62894">
    <property type="entry name" value="S62894"/>
</dbReference>
<dbReference type="RefSeq" id="NP_003089.1">
    <molecule id="Q13424-1"/>
    <property type="nucleotide sequence ID" value="NM_003098.3"/>
</dbReference>
<dbReference type="BMRB" id="Q13424"/>
<dbReference type="SMR" id="Q13424"/>
<dbReference type="BioGRID" id="112523">
    <property type="interactions" value="97"/>
</dbReference>
<dbReference type="ComplexPortal" id="CPX-2424">
    <property type="entry name" value="Dystrophin glycoprotein complex, skeletal muscle variant"/>
</dbReference>
<dbReference type="ComplexPortal" id="CPX-2443">
    <property type="entry name" value="Dystrophin glycoprotein complex, neuromuscular junction variant"/>
</dbReference>
<dbReference type="ComplexPortal" id="CPX-2453">
    <property type="entry name" value="Dystrophin glycoprotein complex, CNS variant"/>
</dbReference>
<dbReference type="ComplexPortal" id="CPX-2454">
    <property type="entry name" value="Dystrophin glycoprotein complex, retinal outer plexiform layer variant"/>
</dbReference>
<dbReference type="ComplexPortal" id="CPX-2455">
    <property type="entry name" value="Dystrophin glycoprotein complex, retinal inner limiting membrane variant"/>
</dbReference>
<dbReference type="CORUM" id="Q13424"/>
<dbReference type="DIP" id="DIP-966N"/>
<dbReference type="FunCoup" id="Q13424">
    <property type="interactions" value="194"/>
</dbReference>
<dbReference type="IntAct" id="Q13424">
    <property type="interactions" value="45"/>
</dbReference>
<dbReference type="MINT" id="Q13424"/>
<dbReference type="STRING" id="9606.ENSP00000217381"/>
<dbReference type="GlyGen" id="Q13424">
    <property type="glycosylation" value="2 sites"/>
</dbReference>
<dbReference type="iPTMnet" id="Q13424"/>
<dbReference type="PhosphoSitePlus" id="Q13424"/>
<dbReference type="BioMuta" id="SNTA1"/>
<dbReference type="DMDM" id="23822157"/>
<dbReference type="jPOST" id="Q13424"/>
<dbReference type="MassIVE" id="Q13424"/>
<dbReference type="PaxDb" id="9606-ENSP00000217381"/>
<dbReference type="PeptideAtlas" id="Q13424"/>
<dbReference type="ProteomicsDB" id="59409">
    <molecule id="Q13424-1"/>
</dbReference>
<dbReference type="Pumba" id="Q13424"/>
<dbReference type="Antibodypedia" id="10673">
    <property type="antibodies" value="454 antibodies from 34 providers"/>
</dbReference>
<dbReference type="DNASU" id="6640"/>
<dbReference type="Ensembl" id="ENST00000217381.3">
    <molecule id="Q13424-1"/>
    <property type="protein sequence ID" value="ENSP00000217381.2"/>
    <property type="gene ID" value="ENSG00000101400.6"/>
</dbReference>
<dbReference type="GeneID" id="6640"/>
<dbReference type="KEGG" id="hsa:6640"/>
<dbReference type="MANE-Select" id="ENST00000217381.3">
    <property type="protein sequence ID" value="ENSP00000217381.2"/>
    <property type="RefSeq nucleotide sequence ID" value="NM_003098.3"/>
    <property type="RefSeq protein sequence ID" value="NP_003089.1"/>
</dbReference>
<dbReference type="UCSC" id="uc002wzd.2">
    <molecule id="Q13424-1"/>
    <property type="organism name" value="human"/>
</dbReference>
<dbReference type="AGR" id="HGNC:11167"/>
<dbReference type="CTD" id="6640"/>
<dbReference type="DisGeNET" id="6640"/>
<dbReference type="GeneCards" id="SNTA1"/>
<dbReference type="HGNC" id="HGNC:11167">
    <property type="gene designation" value="SNTA1"/>
</dbReference>
<dbReference type="HPA" id="ENSG00000101400">
    <property type="expression patterns" value="Tissue enhanced (heart muscle, skeletal muscle, tongue)"/>
</dbReference>
<dbReference type="MalaCards" id="SNTA1"/>
<dbReference type="MIM" id="601017">
    <property type="type" value="gene"/>
</dbReference>
<dbReference type="MIM" id="612955">
    <property type="type" value="phenotype"/>
</dbReference>
<dbReference type="neXtProt" id="NX_Q13424"/>
<dbReference type="OpenTargets" id="ENSG00000101400"/>
<dbReference type="Orphanet" id="101016">
    <property type="disease" value="Romano-Ward syndrome"/>
</dbReference>
<dbReference type="PharmGKB" id="PA36007"/>
<dbReference type="VEuPathDB" id="HostDB:ENSG00000101400"/>
<dbReference type="eggNOG" id="KOG3551">
    <property type="taxonomic scope" value="Eukaryota"/>
</dbReference>
<dbReference type="GeneTree" id="ENSGT00950000182863"/>
<dbReference type="HOGENOM" id="CLU_026406_3_1_1"/>
<dbReference type="InParanoid" id="Q13424"/>
<dbReference type="OMA" id="DLRCCPK"/>
<dbReference type="OrthoDB" id="409749at2759"/>
<dbReference type="PAN-GO" id="Q13424">
    <property type="GO annotations" value="4 GO annotations based on evolutionary models"/>
</dbReference>
<dbReference type="PhylomeDB" id="Q13424"/>
<dbReference type="TreeFam" id="TF317932"/>
<dbReference type="PathwayCommons" id="Q13424"/>
<dbReference type="Reactome" id="R-HSA-9913351">
    <property type="pathway name" value="Formation of the dystrophin-glycoprotein complex (DGC)"/>
</dbReference>
<dbReference type="SignaLink" id="Q13424"/>
<dbReference type="SIGNOR" id="Q13424"/>
<dbReference type="BioGRID-ORCS" id="6640">
    <property type="hits" value="33 hits in 1160 CRISPR screens"/>
</dbReference>
<dbReference type="CD-CODE" id="FB4E32DD">
    <property type="entry name" value="Presynaptic clusters and postsynaptic densities"/>
</dbReference>
<dbReference type="ChiTaRS" id="SNTA1">
    <property type="organism name" value="human"/>
</dbReference>
<dbReference type="GeneWiki" id="Syntrophin,_alpha_1"/>
<dbReference type="GenomeRNAi" id="6640"/>
<dbReference type="Pharos" id="Q13424">
    <property type="development level" value="Tbio"/>
</dbReference>
<dbReference type="PRO" id="PR:Q13424"/>
<dbReference type="Proteomes" id="UP000005640">
    <property type="component" value="Chromosome 20"/>
</dbReference>
<dbReference type="RNAct" id="Q13424">
    <property type="molecule type" value="protein"/>
</dbReference>
<dbReference type="Bgee" id="ENSG00000101400">
    <property type="expression patterns" value="Expressed in apex of heart and 186 other cell types or tissues"/>
</dbReference>
<dbReference type="GO" id="GO:0070161">
    <property type="term" value="C:anchoring junction"/>
    <property type="evidence" value="ECO:0007669"/>
    <property type="project" value="UniProtKB-SubCell"/>
</dbReference>
<dbReference type="GO" id="GO:0005737">
    <property type="term" value="C:cytoplasm"/>
    <property type="evidence" value="ECO:0007669"/>
    <property type="project" value="UniProtKB-KW"/>
</dbReference>
<dbReference type="GO" id="GO:0005856">
    <property type="term" value="C:cytoskeleton"/>
    <property type="evidence" value="ECO:0007669"/>
    <property type="project" value="UniProtKB-SubCell"/>
</dbReference>
<dbReference type="GO" id="GO:0016010">
    <property type="term" value="C:dystrophin-associated glycoprotein complex"/>
    <property type="evidence" value="ECO:0000318"/>
    <property type="project" value="GO_Central"/>
</dbReference>
<dbReference type="GO" id="GO:0031594">
    <property type="term" value="C:neuromuscular junction"/>
    <property type="evidence" value="ECO:0000318"/>
    <property type="project" value="GO_Central"/>
</dbReference>
<dbReference type="GO" id="GO:0005886">
    <property type="term" value="C:plasma membrane"/>
    <property type="evidence" value="ECO:0000304"/>
    <property type="project" value="Reactome"/>
</dbReference>
<dbReference type="GO" id="GO:0032991">
    <property type="term" value="C:protein-containing complex"/>
    <property type="evidence" value="ECO:0000314"/>
    <property type="project" value="BHF-UCL"/>
</dbReference>
<dbReference type="GO" id="GO:0042383">
    <property type="term" value="C:sarcolemma"/>
    <property type="evidence" value="ECO:0000318"/>
    <property type="project" value="GO_Central"/>
</dbReference>
<dbReference type="GO" id="GO:0016013">
    <property type="term" value="C:syntrophin complex"/>
    <property type="evidence" value="ECO:0000304"/>
    <property type="project" value="BHF-UCL"/>
</dbReference>
<dbReference type="GO" id="GO:0003779">
    <property type="term" value="F:actin binding"/>
    <property type="evidence" value="ECO:0007669"/>
    <property type="project" value="UniProtKB-KW"/>
</dbReference>
<dbReference type="GO" id="GO:0051117">
    <property type="term" value="F:ATPase binding"/>
    <property type="evidence" value="ECO:0000353"/>
    <property type="project" value="BHF-UCL"/>
</dbReference>
<dbReference type="GO" id="GO:0005516">
    <property type="term" value="F:calmodulin binding"/>
    <property type="evidence" value="ECO:0007669"/>
    <property type="project" value="UniProtKB-KW"/>
</dbReference>
<dbReference type="GO" id="GO:0050998">
    <property type="term" value="F:nitric-oxide synthase binding"/>
    <property type="evidence" value="ECO:0000353"/>
    <property type="project" value="BHF-UCL"/>
</dbReference>
<dbReference type="GO" id="GO:0030165">
    <property type="term" value="F:PDZ domain binding"/>
    <property type="evidence" value="ECO:0007669"/>
    <property type="project" value="Ensembl"/>
</dbReference>
<dbReference type="GO" id="GO:0017080">
    <property type="term" value="F:sodium channel regulator activity"/>
    <property type="evidence" value="ECO:0000315"/>
    <property type="project" value="BHF-UCL"/>
</dbReference>
<dbReference type="GO" id="GO:0005198">
    <property type="term" value="F:structural molecule activity"/>
    <property type="evidence" value="ECO:0007669"/>
    <property type="project" value="InterPro"/>
</dbReference>
<dbReference type="GO" id="GO:0044325">
    <property type="term" value="F:transmembrane transporter binding"/>
    <property type="evidence" value="ECO:0000353"/>
    <property type="project" value="BHF-UCL"/>
</dbReference>
<dbReference type="GO" id="GO:0006936">
    <property type="term" value="P:muscle contraction"/>
    <property type="evidence" value="ECO:0000304"/>
    <property type="project" value="ProtInc"/>
</dbReference>
<dbReference type="GO" id="GO:0002027">
    <property type="term" value="P:regulation of heart rate"/>
    <property type="evidence" value="ECO:0000315"/>
    <property type="project" value="BHF-UCL"/>
</dbReference>
<dbReference type="GO" id="GO:1902305">
    <property type="term" value="P:regulation of sodium ion transmembrane transport"/>
    <property type="evidence" value="ECO:0000315"/>
    <property type="project" value="BHF-UCL"/>
</dbReference>
<dbReference type="GO" id="GO:0060307">
    <property type="term" value="P:regulation of ventricular cardiac muscle cell membrane repolarization"/>
    <property type="evidence" value="ECO:0000315"/>
    <property type="project" value="BHF-UCL"/>
</dbReference>
<dbReference type="GO" id="GO:0086005">
    <property type="term" value="P:ventricular cardiac muscle cell action potential"/>
    <property type="evidence" value="ECO:0000315"/>
    <property type="project" value="BHF-UCL"/>
</dbReference>
<dbReference type="CDD" id="cd06801">
    <property type="entry name" value="PDZ_syntrophin-like"/>
    <property type="match status" value="1"/>
</dbReference>
<dbReference type="CDD" id="cd01258">
    <property type="entry name" value="PHsplit_syntrophin"/>
    <property type="match status" value="1"/>
</dbReference>
<dbReference type="FunFam" id="2.30.29.30:FF:000360">
    <property type="entry name" value="Alpha-1-syntrophin"/>
    <property type="match status" value="1"/>
</dbReference>
<dbReference type="FunFam" id="2.30.29.30:FF:000329">
    <property type="entry name" value="alpha-1-syntrophin"/>
    <property type="match status" value="1"/>
</dbReference>
<dbReference type="FunFam" id="2.30.42.10:FF:000052">
    <property type="entry name" value="Syntrophin beta 1"/>
    <property type="match status" value="1"/>
</dbReference>
<dbReference type="Gene3D" id="2.30.42.10">
    <property type="match status" value="1"/>
</dbReference>
<dbReference type="Gene3D" id="2.30.29.30">
    <property type="entry name" value="Pleckstrin-homology domain (PH domain)/Phosphotyrosine-binding domain (PTB)"/>
    <property type="match status" value="2"/>
</dbReference>
<dbReference type="InterPro" id="IPR001478">
    <property type="entry name" value="PDZ"/>
</dbReference>
<dbReference type="InterPro" id="IPR036034">
    <property type="entry name" value="PDZ_sf"/>
</dbReference>
<dbReference type="InterPro" id="IPR011993">
    <property type="entry name" value="PH-like_dom_sf"/>
</dbReference>
<dbReference type="InterPro" id="IPR001849">
    <property type="entry name" value="PH_domain"/>
</dbReference>
<dbReference type="InterPro" id="IPR041428">
    <property type="entry name" value="PHsplit_syntrophin"/>
</dbReference>
<dbReference type="InterPro" id="IPR015482">
    <property type="entry name" value="Syntrophin"/>
</dbReference>
<dbReference type="InterPro" id="IPR055108">
    <property type="entry name" value="Syntrophin_4th"/>
</dbReference>
<dbReference type="PANTHER" id="PTHR10554:SF6">
    <property type="entry name" value="ALPHA-1-SYNTROPHIN"/>
    <property type="match status" value="1"/>
</dbReference>
<dbReference type="PANTHER" id="PTHR10554">
    <property type="entry name" value="SYNTROPHIN"/>
    <property type="match status" value="1"/>
</dbReference>
<dbReference type="Pfam" id="PF00595">
    <property type="entry name" value="PDZ"/>
    <property type="match status" value="1"/>
</dbReference>
<dbReference type="Pfam" id="PF00169">
    <property type="entry name" value="PH"/>
    <property type="match status" value="1"/>
</dbReference>
<dbReference type="Pfam" id="PF18012">
    <property type="entry name" value="PH_17"/>
    <property type="match status" value="1"/>
</dbReference>
<dbReference type="Pfam" id="PF23012">
    <property type="entry name" value="Syntrophin_4th"/>
    <property type="match status" value="1"/>
</dbReference>
<dbReference type="SMART" id="SM00228">
    <property type="entry name" value="PDZ"/>
    <property type="match status" value="1"/>
</dbReference>
<dbReference type="SMART" id="SM00233">
    <property type="entry name" value="PH"/>
    <property type="match status" value="2"/>
</dbReference>
<dbReference type="SUPFAM" id="SSF50156">
    <property type="entry name" value="PDZ domain-like"/>
    <property type="match status" value="1"/>
</dbReference>
<dbReference type="SUPFAM" id="SSF50729">
    <property type="entry name" value="PH domain-like"/>
    <property type="match status" value="1"/>
</dbReference>
<dbReference type="PROSITE" id="PS50106">
    <property type="entry name" value="PDZ"/>
    <property type="match status" value="1"/>
</dbReference>
<dbReference type="PROSITE" id="PS50003">
    <property type="entry name" value="PH_DOMAIN"/>
    <property type="match status" value="2"/>
</dbReference>
<organism>
    <name type="scientific">Homo sapiens</name>
    <name type="common">Human</name>
    <dbReference type="NCBI Taxonomy" id="9606"/>
    <lineage>
        <taxon>Eukaryota</taxon>
        <taxon>Metazoa</taxon>
        <taxon>Chordata</taxon>
        <taxon>Craniata</taxon>
        <taxon>Vertebrata</taxon>
        <taxon>Euteleostomi</taxon>
        <taxon>Mammalia</taxon>
        <taxon>Eutheria</taxon>
        <taxon>Euarchontoglires</taxon>
        <taxon>Primates</taxon>
        <taxon>Haplorrhini</taxon>
        <taxon>Catarrhini</taxon>
        <taxon>Hominidae</taxon>
        <taxon>Homo</taxon>
    </lineage>
</organism>
<evidence type="ECO:0000250" key="1"/>
<evidence type="ECO:0000250" key="2">
    <source>
        <dbReference type="UniProtKB" id="Q61234"/>
    </source>
</evidence>
<evidence type="ECO:0000255" key="3">
    <source>
        <dbReference type="PROSITE-ProRule" id="PRU00143"/>
    </source>
</evidence>
<evidence type="ECO:0000255" key="4">
    <source>
        <dbReference type="PROSITE-ProRule" id="PRU00145"/>
    </source>
</evidence>
<evidence type="ECO:0000256" key="5">
    <source>
        <dbReference type="SAM" id="MobiDB-lite"/>
    </source>
</evidence>
<evidence type="ECO:0000269" key="6">
    <source>
    </source>
</evidence>
<evidence type="ECO:0000269" key="7">
    <source>
    </source>
</evidence>
<evidence type="ECO:0000303" key="8">
    <source>
    </source>
</evidence>
<evidence type="ECO:0000305" key="9"/>
<evidence type="ECO:0007744" key="10">
    <source>
    </source>
</evidence>
<evidence type="ECO:0007744" key="11">
    <source>
    </source>
</evidence>
<evidence type="ECO:0007744" key="12">
    <source>
    </source>
</evidence>
<evidence type="ECO:0007744" key="13">
    <source>
    </source>
</evidence>
<evidence type="ECO:0007744" key="14">
    <source>
    </source>
</evidence>
<reference key="1">
    <citation type="journal article" date="1996" name="J. Biol. Chem.">
        <title>The three human syntrophin genes are expressed in diverse tissues, have distinct chromosomal locations, and each bind to dystrophin and its relatives.</title>
        <authorList>
            <person name="Ahn A.H."/>
            <person name="Feener C.A."/>
            <person name="Gussoni E."/>
            <person name="Yoshida M."/>
            <person name="Ozawa E."/>
            <person name="Kunkel L.M."/>
        </authorList>
    </citation>
    <scope>NUCLEOTIDE SEQUENCE [MRNA] (ISOFORM 1)</scope>
    <scope>INTERACTION WITH DMD; DTNA AND UTRN</scope>
    <source>
        <tissue>Muscle</tissue>
    </source>
</reference>
<reference key="2">
    <citation type="journal article" date="1996" name="FEBS Lett.">
        <title>Characterization of the dystrophin-syntrophin interaction using the two-hybrid system in yeast.</title>
        <authorList>
            <person name="Castello A."/>
            <person name="Brocheriou V."/>
            <person name="Chafey P."/>
            <person name="Kahn A."/>
            <person name="Gilgenkrantz H."/>
        </authorList>
    </citation>
    <scope>NUCLEOTIDE SEQUENCE [MRNA] (ISOFORM 1)</scope>
    <scope>INTERACTION WITH DMD</scope>
    <source>
        <tissue>Heart</tissue>
    </source>
</reference>
<reference key="3">
    <citation type="journal article" date="1999" name="J. Biol. Chem.">
        <title>Stress-activated protein kinase-3 interacts with the PDZ domain of alpha1-syntrophin. A mechanism for specific substrate recognition.</title>
        <authorList>
            <person name="Hasegawa M."/>
            <person name="Cuenda A."/>
            <person name="Spillantini M.G."/>
            <person name="Thomas G.M."/>
            <person name="Buee-Scherrer V."/>
            <person name="Cohen P."/>
            <person name="Goedert M."/>
        </authorList>
    </citation>
    <scope>NUCLEOTIDE SEQUENCE [MRNA] (ISOFORM 1)</scope>
    <scope>INTERACTION WITH MAPK12</scope>
</reference>
<reference key="4">
    <citation type="journal article" date="2004" name="Nat. Genet.">
        <title>Complete sequencing and characterization of 21,243 full-length human cDNAs.</title>
        <authorList>
            <person name="Ota T."/>
            <person name="Suzuki Y."/>
            <person name="Nishikawa T."/>
            <person name="Otsuki T."/>
            <person name="Sugiyama T."/>
            <person name="Irie R."/>
            <person name="Wakamatsu A."/>
            <person name="Hayashi K."/>
            <person name="Sato H."/>
            <person name="Nagai K."/>
            <person name="Kimura K."/>
            <person name="Makita H."/>
            <person name="Sekine M."/>
            <person name="Obayashi M."/>
            <person name="Nishi T."/>
            <person name="Shibahara T."/>
            <person name="Tanaka T."/>
            <person name="Ishii S."/>
            <person name="Yamamoto J."/>
            <person name="Saito K."/>
            <person name="Kawai Y."/>
            <person name="Isono Y."/>
            <person name="Nakamura Y."/>
            <person name="Nagahari K."/>
            <person name="Murakami K."/>
            <person name="Yasuda T."/>
            <person name="Iwayanagi T."/>
            <person name="Wagatsuma M."/>
            <person name="Shiratori A."/>
            <person name="Sudo H."/>
            <person name="Hosoiri T."/>
            <person name="Kaku Y."/>
            <person name="Kodaira H."/>
            <person name="Kondo H."/>
            <person name="Sugawara M."/>
            <person name="Takahashi M."/>
            <person name="Kanda K."/>
            <person name="Yokoi T."/>
            <person name="Furuya T."/>
            <person name="Kikkawa E."/>
            <person name="Omura Y."/>
            <person name="Abe K."/>
            <person name="Kamihara K."/>
            <person name="Katsuta N."/>
            <person name="Sato K."/>
            <person name="Tanikawa M."/>
            <person name="Yamazaki M."/>
            <person name="Ninomiya K."/>
            <person name="Ishibashi T."/>
            <person name="Yamashita H."/>
            <person name="Murakawa K."/>
            <person name="Fujimori K."/>
            <person name="Tanai H."/>
            <person name="Kimata M."/>
            <person name="Watanabe M."/>
            <person name="Hiraoka S."/>
            <person name="Chiba Y."/>
            <person name="Ishida S."/>
            <person name="Ono Y."/>
            <person name="Takiguchi S."/>
            <person name="Watanabe S."/>
            <person name="Yosida M."/>
            <person name="Hotuta T."/>
            <person name="Kusano J."/>
            <person name="Kanehori K."/>
            <person name="Takahashi-Fujii A."/>
            <person name="Hara H."/>
            <person name="Tanase T.-O."/>
            <person name="Nomura Y."/>
            <person name="Togiya S."/>
            <person name="Komai F."/>
            <person name="Hara R."/>
            <person name="Takeuchi K."/>
            <person name="Arita M."/>
            <person name="Imose N."/>
            <person name="Musashino K."/>
            <person name="Yuuki H."/>
            <person name="Oshima A."/>
            <person name="Sasaki N."/>
            <person name="Aotsuka S."/>
            <person name="Yoshikawa Y."/>
            <person name="Matsunawa H."/>
            <person name="Ichihara T."/>
            <person name="Shiohata N."/>
            <person name="Sano S."/>
            <person name="Moriya S."/>
            <person name="Momiyama H."/>
            <person name="Satoh N."/>
            <person name="Takami S."/>
            <person name="Terashima Y."/>
            <person name="Suzuki O."/>
            <person name="Nakagawa S."/>
            <person name="Senoh A."/>
            <person name="Mizoguchi H."/>
            <person name="Goto Y."/>
            <person name="Shimizu F."/>
            <person name="Wakebe H."/>
            <person name="Hishigaki H."/>
            <person name="Watanabe T."/>
            <person name="Sugiyama A."/>
            <person name="Takemoto M."/>
            <person name="Kawakami B."/>
            <person name="Yamazaki M."/>
            <person name="Watanabe K."/>
            <person name="Kumagai A."/>
            <person name="Itakura S."/>
            <person name="Fukuzumi Y."/>
            <person name="Fujimori Y."/>
            <person name="Komiyama M."/>
            <person name="Tashiro H."/>
            <person name="Tanigami A."/>
            <person name="Fujiwara T."/>
            <person name="Ono T."/>
            <person name="Yamada K."/>
            <person name="Fujii Y."/>
            <person name="Ozaki K."/>
            <person name="Hirao M."/>
            <person name="Ohmori Y."/>
            <person name="Kawabata A."/>
            <person name="Hikiji T."/>
            <person name="Kobatake N."/>
            <person name="Inagaki H."/>
            <person name="Ikema Y."/>
            <person name="Okamoto S."/>
            <person name="Okitani R."/>
            <person name="Kawakami T."/>
            <person name="Noguchi S."/>
            <person name="Itoh T."/>
            <person name="Shigeta K."/>
            <person name="Senba T."/>
            <person name="Matsumura K."/>
            <person name="Nakajima Y."/>
            <person name="Mizuno T."/>
            <person name="Morinaga M."/>
            <person name="Sasaki M."/>
            <person name="Togashi T."/>
            <person name="Oyama M."/>
            <person name="Hata H."/>
            <person name="Watanabe M."/>
            <person name="Komatsu T."/>
            <person name="Mizushima-Sugano J."/>
            <person name="Satoh T."/>
            <person name="Shirai Y."/>
            <person name="Takahashi Y."/>
            <person name="Nakagawa K."/>
            <person name="Okumura K."/>
            <person name="Nagase T."/>
            <person name="Nomura N."/>
            <person name="Kikuchi H."/>
            <person name="Masuho Y."/>
            <person name="Yamashita R."/>
            <person name="Nakai K."/>
            <person name="Yada T."/>
            <person name="Nakamura Y."/>
            <person name="Ohara O."/>
            <person name="Isogai T."/>
            <person name="Sugano S."/>
        </authorList>
    </citation>
    <scope>NUCLEOTIDE SEQUENCE [LARGE SCALE MRNA] (ISOFORMS 1 AND 2)</scope>
    <source>
        <tissue>Small intestine</tissue>
        <tissue>Testis</tissue>
    </source>
</reference>
<reference key="5">
    <citation type="journal article" date="2001" name="Nature">
        <title>The DNA sequence and comparative analysis of human chromosome 20.</title>
        <authorList>
            <person name="Deloukas P."/>
            <person name="Matthews L.H."/>
            <person name="Ashurst J.L."/>
            <person name="Burton J."/>
            <person name="Gilbert J.G.R."/>
            <person name="Jones M."/>
            <person name="Stavrides G."/>
            <person name="Almeida J.P."/>
            <person name="Babbage A.K."/>
            <person name="Bagguley C.L."/>
            <person name="Bailey J."/>
            <person name="Barlow K.F."/>
            <person name="Bates K.N."/>
            <person name="Beard L.M."/>
            <person name="Beare D.M."/>
            <person name="Beasley O.P."/>
            <person name="Bird C.P."/>
            <person name="Blakey S.E."/>
            <person name="Bridgeman A.M."/>
            <person name="Brown A.J."/>
            <person name="Buck D."/>
            <person name="Burrill W.D."/>
            <person name="Butler A.P."/>
            <person name="Carder C."/>
            <person name="Carter N.P."/>
            <person name="Chapman J.C."/>
            <person name="Clamp M."/>
            <person name="Clark G."/>
            <person name="Clark L.N."/>
            <person name="Clark S.Y."/>
            <person name="Clee C.M."/>
            <person name="Clegg S."/>
            <person name="Cobley V.E."/>
            <person name="Collier R.E."/>
            <person name="Connor R.E."/>
            <person name="Corby N.R."/>
            <person name="Coulson A."/>
            <person name="Coville G.J."/>
            <person name="Deadman R."/>
            <person name="Dhami P.D."/>
            <person name="Dunn M."/>
            <person name="Ellington A.G."/>
            <person name="Frankland J.A."/>
            <person name="Fraser A."/>
            <person name="French L."/>
            <person name="Garner P."/>
            <person name="Grafham D.V."/>
            <person name="Griffiths C."/>
            <person name="Griffiths M.N.D."/>
            <person name="Gwilliam R."/>
            <person name="Hall R.E."/>
            <person name="Hammond S."/>
            <person name="Harley J.L."/>
            <person name="Heath P.D."/>
            <person name="Ho S."/>
            <person name="Holden J.L."/>
            <person name="Howden P.J."/>
            <person name="Huckle E."/>
            <person name="Hunt A.R."/>
            <person name="Hunt S.E."/>
            <person name="Jekosch K."/>
            <person name="Johnson C.M."/>
            <person name="Johnson D."/>
            <person name="Kay M.P."/>
            <person name="Kimberley A.M."/>
            <person name="King A."/>
            <person name="Knights A."/>
            <person name="Laird G.K."/>
            <person name="Lawlor S."/>
            <person name="Lehvaeslaiho M.H."/>
            <person name="Leversha M.A."/>
            <person name="Lloyd C."/>
            <person name="Lloyd D.M."/>
            <person name="Lovell J.D."/>
            <person name="Marsh V.L."/>
            <person name="Martin S.L."/>
            <person name="McConnachie L.J."/>
            <person name="McLay K."/>
            <person name="McMurray A.A."/>
            <person name="Milne S.A."/>
            <person name="Mistry D."/>
            <person name="Moore M.J.F."/>
            <person name="Mullikin J.C."/>
            <person name="Nickerson T."/>
            <person name="Oliver K."/>
            <person name="Parker A."/>
            <person name="Patel R."/>
            <person name="Pearce T.A.V."/>
            <person name="Peck A.I."/>
            <person name="Phillimore B.J.C.T."/>
            <person name="Prathalingam S.R."/>
            <person name="Plumb R.W."/>
            <person name="Ramsay H."/>
            <person name="Rice C.M."/>
            <person name="Ross M.T."/>
            <person name="Scott C.E."/>
            <person name="Sehra H.K."/>
            <person name="Shownkeen R."/>
            <person name="Sims S."/>
            <person name="Skuce C.D."/>
            <person name="Smith M.L."/>
            <person name="Soderlund C."/>
            <person name="Steward C.A."/>
            <person name="Sulston J.E."/>
            <person name="Swann R.M."/>
            <person name="Sycamore N."/>
            <person name="Taylor R."/>
            <person name="Tee L."/>
            <person name="Thomas D.W."/>
            <person name="Thorpe A."/>
            <person name="Tracey A."/>
            <person name="Tromans A.C."/>
            <person name="Vaudin M."/>
            <person name="Wall M."/>
            <person name="Wallis J.M."/>
            <person name="Whitehead S.L."/>
            <person name="Whittaker P."/>
            <person name="Willey D.L."/>
            <person name="Williams L."/>
            <person name="Williams S.A."/>
            <person name="Wilming L."/>
            <person name="Wray P.W."/>
            <person name="Hubbard T."/>
            <person name="Durbin R.M."/>
            <person name="Bentley D.R."/>
            <person name="Beck S."/>
            <person name="Rogers J."/>
        </authorList>
    </citation>
    <scope>NUCLEOTIDE SEQUENCE [LARGE SCALE GENOMIC DNA]</scope>
</reference>
<reference key="6">
    <citation type="submission" date="2005-09" db="EMBL/GenBank/DDBJ databases">
        <authorList>
            <person name="Mural R.J."/>
            <person name="Istrail S."/>
            <person name="Sutton G.G."/>
            <person name="Florea L."/>
            <person name="Halpern A.L."/>
            <person name="Mobarry C.M."/>
            <person name="Lippert R."/>
            <person name="Walenz B."/>
            <person name="Shatkay H."/>
            <person name="Dew I."/>
            <person name="Miller J.R."/>
            <person name="Flanigan M.J."/>
            <person name="Edwards N.J."/>
            <person name="Bolanos R."/>
            <person name="Fasulo D."/>
            <person name="Halldorsson B.V."/>
            <person name="Hannenhalli S."/>
            <person name="Turner R."/>
            <person name="Yooseph S."/>
            <person name="Lu F."/>
            <person name="Nusskern D.R."/>
            <person name="Shue B.C."/>
            <person name="Zheng X.H."/>
            <person name="Zhong F."/>
            <person name="Delcher A.L."/>
            <person name="Huson D.H."/>
            <person name="Kravitz S.A."/>
            <person name="Mouchard L."/>
            <person name="Reinert K."/>
            <person name="Remington K.A."/>
            <person name="Clark A.G."/>
            <person name="Waterman M.S."/>
            <person name="Eichler E.E."/>
            <person name="Adams M.D."/>
            <person name="Hunkapiller M.W."/>
            <person name="Myers E.W."/>
            <person name="Venter J.C."/>
        </authorList>
    </citation>
    <scope>NUCLEOTIDE SEQUENCE [LARGE SCALE GENOMIC DNA]</scope>
</reference>
<reference key="7">
    <citation type="journal article" date="2004" name="Genome Res.">
        <title>The status, quality, and expansion of the NIH full-length cDNA project: the Mammalian Gene Collection (MGC).</title>
        <authorList>
            <consortium name="The MGC Project Team"/>
        </authorList>
    </citation>
    <scope>NUCLEOTIDE SEQUENCE [LARGE SCALE MRNA] (ISOFORM 1)</scope>
    <source>
        <tissue>Liver</tissue>
    </source>
</reference>
<reference key="8">
    <citation type="journal article" date="1999" name="Mol. Cell">
        <title>A role for a PDZ protein in the early secretory pathway for the targeting of proTGF-alpha to the cell surface.</title>
        <authorList>
            <person name="Fernandez-Larrea J."/>
            <person name="Merlos-Suarez A."/>
            <person name="Urena J.M."/>
            <person name="Baselga J."/>
            <person name="Arribas J."/>
        </authorList>
    </citation>
    <scope>INTERACTION WITH TGFA</scope>
</reference>
<reference key="9">
    <citation type="journal article" date="2001" name="FEBS Lett.">
        <title>The C-terminus of human glutaminase L mediates association with PDZ domain-containing proteins.</title>
        <authorList>
            <person name="Olalla L."/>
            <person name="Aledo J.C."/>
            <person name="Bannenberg G."/>
            <person name="Marquez J."/>
        </authorList>
    </citation>
    <scope>INTERACTION WITH GA</scope>
</reference>
<reference key="10">
    <citation type="journal article" date="2006" name="Cell">
        <title>Global, in vivo, and site-specific phosphorylation dynamics in signaling networks.</title>
        <authorList>
            <person name="Olsen J.V."/>
            <person name="Blagoev B."/>
            <person name="Gnad F."/>
            <person name="Macek B."/>
            <person name="Kumar C."/>
            <person name="Mortensen P."/>
            <person name="Mann M."/>
        </authorList>
    </citation>
    <scope>PHOSPHORYLATION [LARGE SCALE ANALYSIS] AT SER-189 AND SER-193</scope>
    <scope>IDENTIFICATION BY MASS SPECTROMETRY [LARGE SCALE ANALYSIS]</scope>
    <source>
        <tissue>Cervix carcinoma</tissue>
    </source>
</reference>
<reference key="11">
    <citation type="journal article" date="2008" name="Proc. Natl. Acad. Sci. U.S.A.">
        <title>A quantitative atlas of mitotic phosphorylation.</title>
        <authorList>
            <person name="Dephoure N."/>
            <person name="Zhou C."/>
            <person name="Villen J."/>
            <person name="Beausoleil S.A."/>
            <person name="Bakalarski C.E."/>
            <person name="Elledge S.J."/>
            <person name="Gygi S.P."/>
        </authorList>
    </citation>
    <scope>PHOSPHORYLATION [LARGE SCALE ANALYSIS] AT SER-189 AND SER-193</scope>
    <scope>IDENTIFICATION BY MASS SPECTROMETRY [LARGE SCALE ANALYSIS]</scope>
    <source>
        <tissue>Cervix carcinoma</tissue>
    </source>
</reference>
<reference key="12">
    <citation type="journal article" date="2009" name="Anal. Chem.">
        <title>Lys-N and trypsin cover complementary parts of the phosphoproteome in a refined SCX-based approach.</title>
        <authorList>
            <person name="Gauci S."/>
            <person name="Helbig A.O."/>
            <person name="Slijper M."/>
            <person name="Krijgsveld J."/>
            <person name="Heck A.J."/>
            <person name="Mohammed S."/>
        </authorList>
    </citation>
    <scope>IDENTIFICATION BY MASS SPECTROMETRY [LARGE SCALE ANALYSIS]</scope>
</reference>
<reference key="13">
    <citation type="journal article" date="2010" name="Sci. Signal.">
        <title>Quantitative phosphoproteomics reveals widespread full phosphorylation site occupancy during mitosis.</title>
        <authorList>
            <person name="Olsen J.V."/>
            <person name="Vermeulen M."/>
            <person name="Santamaria A."/>
            <person name="Kumar C."/>
            <person name="Miller M.L."/>
            <person name="Jensen L.J."/>
            <person name="Gnad F."/>
            <person name="Cox J."/>
            <person name="Jensen T.S."/>
            <person name="Nigg E.A."/>
            <person name="Brunak S."/>
            <person name="Mann M."/>
        </authorList>
    </citation>
    <scope>PHOSPHORYLATION [LARGE SCALE ANALYSIS] AT SER-189</scope>
    <scope>IDENTIFICATION BY MASS SPECTROMETRY [LARGE SCALE ANALYSIS]</scope>
    <source>
        <tissue>Cervix carcinoma</tissue>
    </source>
</reference>
<reference key="14">
    <citation type="journal article" date="2013" name="J. Proteome Res.">
        <title>Toward a comprehensive characterization of a human cancer cell phosphoproteome.</title>
        <authorList>
            <person name="Zhou H."/>
            <person name="Di Palma S."/>
            <person name="Preisinger C."/>
            <person name="Peng M."/>
            <person name="Polat A.N."/>
            <person name="Heck A.J."/>
            <person name="Mohammed S."/>
        </authorList>
    </citation>
    <scope>PHOSPHORYLATION [LARGE SCALE ANALYSIS] AT SER-189 AND SER-193</scope>
    <scope>IDENTIFICATION BY MASS SPECTROMETRY [LARGE SCALE ANALYSIS]</scope>
    <source>
        <tissue>Cervix carcinoma</tissue>
        <tissue>Erythroleukemia</tissue>
    </source>
</reference>
<reference key="15">
    <citation type="journal article" date="2014" name="J. Proteomics">
        <title>An enzyme assisted RP-RPLC approach for in-depth analysis of human liver phosphoproteome.</title>
        <authorList>
            <person name="Bian Y."/>
            <person name="Song C."/>
            <person name="Cheng K."/>
            <person name="Dong M."/>
            <person name="Wang F."/>
            <person name="Huang J."/>
            <person name="Sun D."/>
            <person name="Wang L."/>
            <person name="Ye M."/>
            <person name="Zou H."/>
        </authorList>
    </citation>
    <scope>PHOSPHORYLATION [LARGE SCALE ANALYSIS] AT SER-184</scope>
    <scope>IDENTIFICATION BY MASS SPECTROMETRY [LARGE SCALE ANALYSIS]</scope>
    <source>
        <tissue>Liver</tissue>
    </source>
</reference>
<reference key="16">
    <citation type="journal article" date="2008" name="Circ. Arrhythm. Electrophysiol.">
        <title>alpha-1-syntrophin mutation and the long-QT syndrome: a disease of sodium channel disruption.</title>
        <authorList>
            <person name="Wu G."/>
            <person name="Ai T."/>
            <person name="Kim J.J."/>
            <person name="Mohapatra B."/>
            <person name="Xi Y."/>
            <person name="Li Z."/>
            <person name="Abbasi S."/>
            <person name="Purevjav E."/>
            <person name="Samani K."/>
            <person name="Ackerman M.J."/>
            <person name="Qi M."/>
            <person name="Moss A.J."/>
            <person name="Shimizu W."/>
            <person name="Towbin J.A."/>
            <person name="Cheng J."/>
            <person name="Vatta M."/>
        </authorList>
    </citation>
    <scope>VARIANT LQT12 GLY-257</scope>
    <scope>CHARACTERIZATION OF VARIANT LQT12 GLY-257</scope>
</reference>
<reference key="17">
    <citation type="journal article" date="2008" name="Proc. Natl. Acad. Sci. U.S.A.">
        <title>Syntrophin mutation associated with long QT syndrome through activation of the nNOS-SCN5A macromolecular complex.</title>
        <authorList>
            <person name="Ueda K."/>
            <person name="Valdivia C."/>
            <person name="Medeiros-Domingo A."/>
            <person name="Tester D.J."/>
            <person name="Vatta M."/>
            <person name="Farrugia G."/>
            <person name="Ackerman M.J."/>
            <person name="Makielski J.C."/>
        </authorList>
    </citation>
    <scope>VARIANT LQT12 VAL-390</scope>
    <scope>CHARACTERIZATION OF VARIANT LQT12 VAL-390</scope>
</reference>
<name>SNTA1_HUMAN</name>
<gene>
    <name type="primary">SNTA1</name>
    <name type="synonym">SNT1</name>
</gene>
<feature type="chain" id="PRO_0000184006" description="Alpha-1-syntrophin">
    <location>
        <begin position="1"/>
        <end position="505"/>
    </location>
</feature>
<feature type="domain" description="PH 1" evidence="4">
    <location>
        <begin position="6"/>
        <end position="269"/>
    </location>
</feature>
<feature type="domain" description="PDZ" evidence="3">
    <location>
        <begin position="87"/>
        <end position="170"/>
    </location>
</feature>
<feature type="domain" description="PH 2" evidence="4">
    <location>
        <begin position="293"/>
        <end position="401"/>
    </location>
</feature>
<feature type="domain" description="SU">
    <location>
        <begin position="449"/>
        <end position="505"/>
    </location>
</feature>
<feature type="region of interest" description="Disordered" evidence="5">
    <location>
        <begin position="1"/>
        <end position="25"/>
    </location>
</feature>
<feature type="region of interest" description="Disordered" evidence="5">
    <location>
        <begin position="40"/>
        <end position="77"/>
    </location>
</feature>
<feature type="region of interest" description="Disordered" evidence="5">
    <location>
        <begin position="180"/>
        <end position="210"/>
    </location>
</feature>
<feature type="region of interest" description="Calmodulin-binding" evidence="1">
    <location>
        <begin position="483"/>
        <end position="505"/>
    </location>
</feature>
<feature type="modified residue" description="Phosphoserine" evidence="2">
    <location>
        <position position="101"/>
    </location>
</feature>
<feature type="modified residue" description="Phosphoserine" evidence="14">
    <location>
        <position position="184"/>
    </location>
</feature>
<feature type="modified residue" description="Phosphoserine" evidence="10 11 12 13">
    <location>
        <position position="189"/>
    </location>
</feature>
<feature type="modified residue" description="Phosphoserine" evidence="10 11 13">
    <location>
        <position position="193"/>
    </location>
</feature>
<feature type="modified residue" description="Phosphoserine" evidence="2">
    <location>
        <position position="200"/>
    </location>
</feature>
<feature type="splice variant" id="VSP_056827" description="In isoform 2." evidence="8">
    <location>
        <begin position="254"/>
        <end position="328"/>
    </location>
</feature>
<feature type="sequence variant" id="VAR_062399" description="In LQT12; leads to a gain of function of the voltage dependent sodium channel; dbSNP:rs56157422." evidence="7">
    <original>A</original>
    <variation>G</variation>
    <location>
        <position position="257"/>
    </location>
</feature>
<feature type="sequence variant" id="VAR_014075" description="In dbSNP:rs1046815.">
    <original>L</original>
    <variation>F</variation>
    <location>
        <position position="364"/>
    </location>
</feature>
<feature type="sequence variant" id="VAR_062400" description="In LQT12; results in released inhibition of nNOS, S-nitrosylation of SCN5A and increased late sodium current; dbSNP:rs121434500." evidence="6">
    <original>A</original>
    <variation>V</variation>
    <location>
        <position position="390"/>
    </location>
</feature>
<feature type="sequence conflict" description="In Ref. 2; AAB36398." evidence="9" ref="2">
    <original>R</original>
    <variation>P</variation>
    <location>
        <position position="6"/>
    </location>
</feature>
<feature type="sequence conflict" description="In Ref. 2; AAB36398." evidence="9" ref="2">
    <original>G</original>
    <variation>A</variation>
    <location>
        <position position="25"/>
    </location>
</feature>
<feature type="sequence conflict" description="In Ref. 2; AAB36398." evidence="9" ref="2">
    <original>LL</original>
    <variation>PV</variation>
    <location>
        <begin position="32"/>
        <end position="33"/>
    </location>
</feature>
<feature type="sequence conflict" description="In Ref. 2; AAB36398." evidence="9" ref="2">
    <original>G</original>
    <variation>D</variation>
    <location>
        <position position="66"/>
    </location>
</feature>
<accession>Q13424</accession>
<accession>A8K7H9</accession>
<accession>B4DX40</accession>
<accession>E1P5N1</accession>
<accession>Q16438</accession>